<keyword id="KW-0469">Meiosis</keyword>
<keyword id="KW-0539">Nucleus</keyword>
<dbReference type="EMBL" id="ABSV01001671">
    <property type="protein sequence ID" value="EDZ70474.1"/>
    <property type="status" value="ALT_SEQ"/>
    <property type="molecule type" value="Genomic_DNA"/>
</dbReference>
<dbReference type="SMR" id="B5VNM2"/>
<dbReference type="OrthoDB" id="32221at4893"/>
<dbReference type="Proteomes" id="UP000008988">
    <property type="component" value="Unassembled WGS sequence"/>
</dbReference>
<dbReference type="GO" id="GO:0005634">
    <property type="term" value="C:nucleus"/>
    <property type="evidence" value="ECO:0007669"/>
    <property type="project" value="UniProtKB-SubCell"/>
</dbReference>
<dbReference type="GO" id="GO:0051321">
    <property type="term" value="P:meiotic cell cycle"/>
    <property type="evidence" value="ECO:0007669"/>
    <property type="project" value="UniProtKB-KW"/>
</dbReference>
<dbReference type="InterPro" id="IPR048920">
    <property type="entry name" value="REC102"/>
</dbReference>
<dbReference type="Pfam" id="PF21736">
    <property type="entry name" value="REC102"/>
    <property type="match status" value="1"/>
</dbReference>
<evidence type="ECO:0000250" key="1">
    <source>
        <dbReference type="UniProtKB" id="Q02721"/>
    </source>
</evidence>
<evidence type="ECO:0000305" key="2"/>
<reference key="1">
    <citation type="journal article" date="2008" name="FEMS Yeast Res.">
        <title>Comparative genome analysis of a Saccharomyces cerevisiae wine strain.</title>
        <authorList>
            <person name="Borneman A.R."/>
            <person name="Forgan A.H."/>
            <person name="Pretorius I.S."/>
            <person name="Chambers P.J."/>
        </authorList>
    </citation>
    <scope>NUCLEOTIDE SEQUENCE [LARGE SCALE GENOMIC DNA]</scope>
    <source>
        <strain>AWRI1631</strain>
    </source>
</reference>
<comment type="function">
    <text evidence="1">Required for formation of the SPO11-mediated double-strand breaks (DSBs) that initiate meiotic recombination. May mediate the interaction between SPO11 subunits during meiosis. Also needed for homolog chromosome pairing, synaptonemal complex formation, and for the proper timing of the first meiotic division. Not required for mitosis and mitotic DNA repair mechanisms.</text>
</comment>
<comment type="subunit">
    <text evidence="1">Interacts with REC104; seems to form a functional unit with REC104. REC102-REC104 interacts with SKI8-SPO11 and this interaction is required for proper subcellular location of the proteins during the initiation of recombination. Interacts with MEI4, REC114 and SPO11.</text>
</comment>
<comment type="subcellular location">
    <subcellularLocation>
        <location evidence="1">Nucleus</location>
    </subcellularLocation>
    <text evidence="1">Associates with chromatin during prophase. Recruitment to chromatin depends on REC104, SPO11 and SKI8.</text>
</comment>
<comment type="miscellaneous">
    <text evidence="1">Despite weak sequence similarities, may correspond to the subunit B of a SPO11-containing topoisomerase 6 complex specifically required for meiotic recombination. Retains some of the structural features of the ancestral archaeal Top6B subunit (AC O05207).</text>
</comment>
<comment type="similarity">
    <text evidence="2">Belongs to the TOP6B-like family.</text>
</comment>
<comment type="sequence caution" evidence="2">
    <conflict type="erroneous gene model prediction">
        <sequence resource="EMBL-CDS" id="EDZ70474"/>
    </conflict>
</comment>
<accession>B5VNM2</accession>
<protein>
    <recommendedName>
        <fullName>Meiotic recombination protein REC102</fullName>
    </recommendedName>
</protein>
<name>TO6BL_YEAS6</name>
<gene>
    <name type="primary">REC102</name>
    <name type="ORF">AWRI1631_123570</name>
</gene>
<sequence length="264" mass="30256">MARDITFLTVFLESCGAVNNDEAGKLLSAWTSTVRIEGPEPTDSNSLYIPLLPPGMLKIKLNFKMNDRLVTEEQELFTKLREIVGSSIRFWEEQLFYQVQDVSTIENHVILSLKCTILTDAQISTFISKPRELHTHAKGYPEIYYLSELSTTVNFFSKEGNYVEISHVIPHFNEYFSSLIVSQLEFEYPMVFSMISRLRLKWQQSSLAPISYALTSNSVLLPIMLNMIAQDKSSTTAYQILCRRRGPPIQNFQIFSIPAVTYNK</sequence>
<proteinExistence type="inferred from homology"/>
<feature type="chain" id="PRO_0000377625" description="Meiotic recombination protein REC102">
    <location>
        <begin position="1"/>
        <end position="264"/>
    </location>
</feature>
<feature type="region of interest" description="Leucine-zipper">
    <location>
        <begin position="200"/>
        <end position="221"/>
    </location>
</feature>
<organism>
    <name type="scientific">Saccharomyces cerevisiae (strain AWRI1631)</name>
    <name type="common">Baker's yeast</name>
    <dbReference type="NCBI Taxonomy" id="545124"/>
    <lineage>
        <taxon>Eukaryota</taxon>
        <taxon>Fungi</taxon>
        <taxon>Dikarya</taxon>
        <taxon>Ascomycota</taxon>
        <taxon>Saccharomycotina</taxon>
        <taxon>Saccharomycetes</taxon>
        <taxon>Saccharomycetales</taxon>
        <taxon>Saccharomycetaceae</taxon>
        <taxon>Saccharomyces</taxon>
    </lineage>
</organism>